<organism>
    <name type="scientific">Anabaena sp. (strain L31)</name>
    <dbReference type="NCBI Taxonomy" id="29412"/>
    <lineage>
        <taxon>Bacteria</taxon>
        <taxon>Bacillati</taxon>
        <taxon>Cyanobacteriota</taxon>
        <taxon>Cyanophyceae</taxon>
        <taxon>Nostocales</taxon>
        <taxon>Nostocaceae</taxon>
        <taxon>Anabaena</taxon>
    </lineage>
</organism>
<reference key="1">
    <citation type="submission" date="2001-10" db="UniProtKB">
        <authorList>
            <person name="Apte S.K."/>
            <person name="Uhlemann E."/>
            <person name="Schmid R."/>
            <person name="Altendorf K."/>
        </authorList>
    </citation>
    <scope>PROTEIN SEQUENCE OF 2-9</scope>
</reference>
<feature type="initiator methionine" description="Removed" evidence="2">
    <location>
        <position position="1"/>
    </location>
</feature>
<feature type="chain" id="PRO_0000262936" description="Photosystem I iron-sulfur center">
    <location>
        <begin position="2"/>
        <end position="9" status="greater than"/>
    </location>
</feature>
<feature type="domain" description="4Fe-4S ferredoxin-type">
    <location>
        <begin position="2"/>
        <end position="9" status="greater than"/>
    </location>
</feature>
<feature type="non-terminal residue">
    <location>
        <position position="9"/>
    </location>
</feature>
<dbReference type="EC" id="1.97.1.12"/>
<dbReference type="GO" id="GO:0009522">
    <property type="term" value="C:photosystem I"/>
    <property type="evidence" value="ECO:0007669"/>
    <property type="project" value="UniProtKB-KW"/>
</dbReference>
<dbReference type="GO" id="GO:0031676">
    <property type="term" value="C:plasma membrane-derived thylakoid membrane"/>
    <property type="evidence" value="ECO:0007669"/>
    <property type="project" value="UniProtKB-SubCell"/>
</dbReference>
<dbReference type="GO" id="GO:0051539">
    <property type="term" value="F:4 iron, 4 sulfur cluster binding"/>
    <property type="evidence" value="ECO:0007669"/>
    <property type="project" value="UniProtKB-KW"/>
</dbReference>
<dbReference type="GO" id="GO:0046872">
    <property type="term" value="F:metal ion binding"/>
    <property type="evidence" value="ECO:0007669"/>
    <property type="project" value="UniProtKB-KW"/>
</dbReference>
<dbReference type="GO" id="GO:0016491">
    <property type="term" value="F:oxidoreductase activity"/>
    <property type="evidence" value="ECO:0007669"/>
    <property type="project" value="UniProtKB-KW"/>
</dbReference>
<dbReference type="GO" id="GO:0015979">
    <property type="term" value="P:photosynthesis"/>
    <property type="evidence" value="ECO:0007669"/>
    <property type="project" value="UniProtKB-KW"/>
</dbReference>
<accession>P83158</accession>
<proteinExistence type="evidence at protein level"/>
<sequence>MSHTVKIYD</sequence>
<comment type="function">
    <text evidence="1">Apoprotein for the two 4Fe-4S centers FA and FB of photosystem I (PSI); essential for photochemical activity. FB is the terminal electron acceptor of PSI, donating electrons to ferredoxin. The C-terminus interacts with PsaA/B/D and helps assemble the protein into the PSI complex. Required for binding of PsaD and PsaE to PSI. PSI is a plastocyanin/cytochrome c6-ferredoxin oxidoreductase, converting photonic excitation into a charge separation, which transfers an electron from the donor P700 chlorophyll pair to the spectroscopically characterized acceptors A0, A1, FX, FA and FB in turn (By similarity).</text>
</comment>
<comment type="catalytic activity">
    <reaction>
        <text>reduced [plastocyanin] + hnu + oxidized [2Fe-2S]-[ferredoxin] = oxidized [plastocyanin] + reduced [2Fe-2S]-[ferredoxin]</text>
        <dbReference type="Rhea" id="RHEA:30407"/>
        <dbReference type="Rhea" id="RHEA-COMP:10000"/>
        <dbReference type="Rhea" id="RHEA-COMP:10001"/>
        <dbReference type="Rhea" id="RHEA-COMP:10039"/>
        <dbReference type="Rhea" id="RHEA-COMP:10040"/>
        <dbReference type="ChEBI" id="CHEBI:29036"/>
        <dbReference type="ChEBI" id="CHEBI:30212"/>
        <dbReference type="ChEBI" id="CHEBI:33737"/>
        <dbReference type="ChEBI" id="CHEBI:33738"/>
        <dbReference type="ChEBI" id="CHEBI:49552"/>
        <dbReference type="EC" id="1.97.1.12"/>
    </reaction>
</comment>
<comment type="cofactor">
    <cofactor evidence="1">
        <name>[4Fe-4S] cluster</name>
        <dbReference type="ChEBI" id="CHEBI:49883"/>
    </cofactor>
    <text evidence="1">Binds 2 [4Fe-4S] clusters. Cluster 2 is most probably the spectroscopically characterized electron acceptor FA and cluster 1 is most probably FB.</text>
</comment>
<comment type="subunit">
    <text evidence="1">The cyanobacterial PSI reaction center is composed of one copy each of PsaA,B,C,D,E,F,I,J,K,L,M and X, and forms trimeric complexes.</text>
</comment>
<comment type="subcellular location">
    <subcellularLocation>
        <location evidence="1">Cellular thylakoid membrane</location>
        <topology evidence="1">Peripheral membrane protein</topology>
        <orientation evidence="1">Cytoplasmic side</orientation>
    </subcellularLocation>
</comment>
<evidence type="ECO:0000250" key="1"/>
<evidence type="ECO:0000269" key="2">
    <source ref="1"/>
</evidence>
<keyword id="KW-0004">4Fe-4S</keyword>
<keyword id="KW-0903">Direct protein sequencing</keyword>
<keyword id="KW-0249">Electron transport</keyword>
<keyword id="KW-0408">Iron</keyword>
<keyword id="KW-0411">Iron-sulfur</keyword>
<keyword id="KW-0472">Membrane</keyword>
<keyword id="KW-0479">Metal-binding</keyword>
<keyword id="KW-0560">Oxidoreductase</keyword>
<keyword id="KW-0602">Photosynthesis</keyword>
<keyword id="KW-0603">Photosystem I</keyword>
<keyword id="KW-0677">Repeat</keyword>
<keyword id="KW-0793">Thylakoid</keyword>
<keyword id="KW-0813">Transport</keyword>
<name>PSAC_ANASL</name>
<gene>
    <name type="primary">psaC</name>
</gene>
<protein>
    <recommendedName>
        <fullName>Photosystem I iron-sulfur center</fullName>
        <ecNumber>1.97.1.12</ecNumber>
    </recommendedName>
    <alternativeName>
        <fullName>9 kDa polypeptide</fullName>
    </alternativeName>
    <alternativeName>
        <fullName>PSI-C</fullName>
    </alternativeName>
    <alternativeName>
        <fullName>Photosystem I subunit VII</fullName>
    </alternativeName>
    <alternativeName>
        <fullName>PsaC</fullName>
    </alternativeName>
</protein>